<accession>Q9Z9A8</accession>
<accession>Q9JQK4</accession>
<proteinExistence type="inferred from homology"/>
<feature type="chain" id="PRO_0000095769" description="Translation initiation factor IF-1">
    <location>
        <begin position="1"/>
        <end position="73"/>
    </location>
</feature>
<feature type="domain" description="S1-like" evidence="1">
    <location>
        <begin position="1"/>
        <end position="73"/>
    </location>
</feature>
<gene>
    <name evidence="1" type="primary">infA</name>
    <name type="ordered locus">CPn_0073</name>
    <name type="ordered locus">CP_0702</name>
    <name type="ordered locus">CpB0073</name>
</gene>
<protein>
    <recommendedName>
        <fullName evidence="1">Translation initiation factor IF-1</fullName>
    </recommendedName>
</protein>
<keyword id="KW-0963">Cytoplasm</keyword>
<keyword id="KW-0396">Initiation factor</keyword>
<keyword id="KW-0648">Protein biosynthesis</keyword>
<keyword id="KW-0694">RNA-binding</keyword>
<keyword id="KW-0699">rRNA-binding</keyword>
<comment type="function">
    <text evidence="1">One of the essential components for the initiation of protein synthesis. Stabilizes the binding of IF-2 and IF-3 on the 30S subunit to which N-formylmethionyl-tRNA(fMet) subsequently binds. Helps modulate mRNA selection, yielding the 30S pre-initiation complex (PIC). Upon addition of the 50S ribosomal subunit IF-1, IF-2 and IF-3 are released leaving the mature 70S translation initiation complex.</text>
</comment>
<comment type="subunit">
    <text evidence="1">Component of the 30S ribosomal translation pre-initiation complex which assembles on the 30S ribosome in the order IF-2 and IF-3, IF-1 and N-formylmethionyl-tRNA(fMet); mRNA recruitment can occur at any time during PIC assembly.</text>
</comment>
<comment type="subcellular location">
    <subcellularLocation>
        <location evidence="1">Cytoplasm</location>
    </subcellularLocation>
</comment>
<comment type="similarity">
    <text evidence="1">Belongs to the IF-1 family.</text>
</comment>
<evidence type="ECO:0000255" key="1">
    <source>
        <dbReference type="HAMAP-Rule" id="MF_00075"/>
    </source>
</evidence>
<dbReference type="EMBL" id="AE001363">
    <property type="protein sequence ID" value="AAD18226.1"/>
    <property type="molecule type" value="Genomic_DNA"/>
</dbReference>
<dbReference type="EMBL" id="AE002161">
    <property type="protein sequence ID" value="AAF38510.1"/>
    <property type="molecule type" value="Genomic_DNA"/>
</dbReference>
<dbReference type="EMBL" id="BA000008">
    <property type="protein sequence ID" value="BAA98283.1"/>
    <property type="molecule type" value="Genomic_DNA"/>
</dbReference>
<dbReference type="EMBL" id="AE009440">
    <property type="protein sequence ID" value="AAP98006.1"/>
    <property type="molecule type" value="Genomic_DNA"/>
</dbReference>
<dbReference type="PIR" id="A86500">
    <property type="entry name" value="A86500"/>
</dbReference>
<dbReference type="PIR" id="E72123">
    <property type="entry name" value="E72123"/>
</dbReference>
<dbReference type="RefSeq" id="NP_224281.1">
    <property type="nucleotide sequence ID" value="NC_000922.1"/>
</dbReference>
<dbReference type="RefSeq" id="WP_010882723.1">
    <property type="nucleotide sequence ID" value="NZ_LN847257.1"/>
</dbReference>
<dbReference type="SMR" id="Q9Z9A8"/>
<dbReference type="STRING" id="406984.CPK_ORF00580"/>
<dbReference type="GeneID" id="45050116"/>
<dbReference type="KEGG" id="cpa:CP_0702"/>
<dbReference type="KEGG" id="cpj:infA"/>
<dbReference type="KEGG" id="cpn:CPn_0073"/>
<dbReference type="KEGG" id="cpt:CpB0073"/>
<dbReference type="PATRIC" id="fig|115713.3.peg.84"/>
<dbReference type="eggNOG" id="COG0361">
    <property type="taxonomic scope" value="Bacteria"/>
</dbReference>
<dbReference type="HOGENOM" id="CLU_151267_1_0_0"/>
<dbReference type="OMA" id="ECLRSAM"/>
<dbReference type="OrthoDB" id="9803250at2"/>
<dbReference type="Proteomes" id="UP000000583">
    <property type="component" value="Chromosome"/>
</dbReference>
<dbReference type="Proteomes" id="UP000000801">
    <property type="component" value="Chromosome"/>
</dbReference>
<dbReference type="GO" id="GO:0005829">
    <property type="term" value="C:cytosol"/>
    <property type="evidence" value="ECO:0007669"/>
    <property type="project" value="TreeGrafter"/>
</dbReference>
<dbReference type="GO" id="GO:0043022">
    <property type="term" value="F:ribosome binding"/>
    <property type="evidence" value="ECO:0007669"/>
    <property type="project" value="UniProtKB-UniRule"/>
</dbReference>
<dbReference type="GO" id="GO:0019843">
    <property type="term" value="F:rRNA binding"/>
    <property type="evidence" value="ECO:0007669"/>
    <property type="project" value="UniProtKB-UniRule"/>
</dbReference>
<dbReference type="GO" id="GO:0003743">
    <property type="term" value="F:translation initiation factor activity"/>
    <property type="evidence" value="ECO:0007669"/>
    <property type="project" value="UniProtKB-UniRule"/>
</dbReference>
<dbReference type="CDD" id="cd04451">
    <property type="entry name" value="S1_IF1"/>
    <property type="match status" value="1"/>
</dbReference>
<dbReference type="FunFam" id="2.40.50.140:FF:000002">
    <property type="entry name" value="Translation initiation factor IF-1"/>
    <property type="match status" value="1"/>
</dbReference>
<dbReference type="Gene3D" id="2.40.50.140">
    <property type="entry name" value="Nucleic acid-binding proteins"/>
    <property type="match status" value="1"/>
</dbReference>
<dbReference type="HAMAP" id="MF_00075">
    <property type="entry name" value="IF_1"/>
    <property type="match status" value="1"/>
</dbReference>
<dbReference type="InterPro" id="IPR012340">
    <property type="entry name" value="NA-bd_OB-fold"/>
</dbReference>
<dbReference type="InterPro" id="IPR006196">
    <property type="entry name" value="RNA-binding_domain_S1_IF1"/>
</dbReference>
<dbReference type="InterPro" id="IPR003029">
    <property type="entry name" value="S1_domain"/>
</dbReference>
<dbReference type="InterPro" id="IPR004368">
    <property type="entry name" value="TIF_IF1"/>
</dbReference>
<dbReference type="NCBIfam" id="TIGR00008">
    <property type="entry name" value="infA"/>
    <property type="match status" value="1"/>
</dbReference>
<dbReference type="PANTHER" id="PTHR33370">
    <property type="entry name" value="TRANSLATION INITIATION FACTOR IF-1, CHLOROPLASTIC"/>
    <property type="match status" value="1"/>
</dbReference>
<dbReference type="PANTHER" id="PTHR33370:SF1">
    <property type="entry name" value="TRANSLATION INITIATION FACTOR IF-1, CHLOROPLASTIC"/>
    <property type="match status" value="1"/>
</dbReference>
<dbReference type="Pfam" id="PF01176">
    <property type="entry name" value="eIF-1a"/>
    <property type="match status" value="1"/>
</dbReference>
<dbReference type="SMART" id="SM00316">
    <property type="entry name" value="S1"/>
    <property type="match status" value="1"/>
</dbReference>
<dbReference type="SUPFAM" id="SSF50249">
    <property type="entry name" value="Nucleic acid-binding proteins"/>
    <property type="match status" value="1"/>
</dbReference>
<dbReference type="PROSITE" id="PS50832">
    <property type="entry name" value="S1_IF1_TYPE"/>
    <property type="match status" value="1"/>
</dbReference>
<reference key="1">
    <citation type="journal article" date="1999" name="Nat. Genet.">
        <title>Comparative genomes of Chlamydia pneumoniae and C. trachomatis.</title>
        <authorList>
            <person name="Kalman S."/>
            <person name="Mitchell W.P."/>
            <person name="Marathe R."/>
            <person name="Lammel C.J."/>
            <person name="Fan J."/>
            <person name="Hyman R.W."/>
            <person name="Olinger L."/>
            <person name="Grimwood J."/>
            <person name="Davis R.W."/>
            <person name="Stephens R.S."/>
        </authorList>
    </citation>
    <scope>NUCLEOTIDE SEQUENCE [LARGE SCALE GENOMIC DNA]</scope>
    <source>
        <strain>CWL029</strain>
    </source>
</reference>
<reference key="2">
    <citation type="journal article" date="2000" name="Nucleic Acids Res.">
        <title>Genome sequences of Chlamydia trachomatis MoPn and Chlamydia pneumoniae AR39.</title>
        <authorList>
            <person name="Read T.D."/>
            <person name="Brunham R.C."/>
            <person name="Shen C."/>
            <person name="Gill S.R."/>
            <person name="Heidelberg J.F."/>
            <person name="White O."/>
            <person name="Hickey E.K."/>
            <person name="Peterson J.D."/>
            <person name="Utterback T.R."/>
            <person name="Berry K.J."/>
            <person name="Bass S."/>
            <person name="Linher K.D."/>
            <person name="Weidman J.F."/>
            <person name="Khouri H.M."/>
            <person name="Craven B."/>
            <person name="Bowman C."/>
            <person name="Dodson R.J."/>
            <person name="Gwinn M.L."/>
            <person name="Nelson W.C."/>
            <person name="DeBoy R.T."/>
            <person name="Kolonay J.F."/>
            <person name="McClarty G."/>
            <person name="Salzberg S.L."/>
            <person name="Eisen J.A."/>
            <person name="Fraser C.M."/>
        </authorList>
    </citation>
    <scope>NUCLEOTIDE SEQUENCE [LARGE SCALE GENOMIC DNA]</scope>
    <source>
        <strain>AR39</strain>
    </source>
</reference>
<reference key="3">
    <citation type="journal article" date="2000" name="Nucleic Acids Res.">
        <title>Comparison of whole genome sequences of Chlamydia pneumoniae J138 from Japan and CWL029 from USA.</title>
        <authorList>
            <person name="Shirai M."/>
            <person name="Hirakawa H."/>
            <person name="Kimoto M."/>
            <person name="Tabuchi M."/>
            <person name="Kishi F."/>
            <person name="Ouchi K."/>
            <person name="Shiba T."/>
            <person name="Ishii K."/>
            <person name="Hattori M."/>
            <person name="Kuhara S."/>
            <person name="Nakazawa T."/>
        </authorList>
    </citation>
    <scope>NUCLEOTIDE SEQUENCE [LARGE SCALE GENOMIC DNA]</scope>
    <source>
        <strain>J138</strain>
    </source>
</reference>
<reference key="4">
    <citation type="submission" date="2002-05" db="EMBL/GenBank/DDBJ databases">
        <title>The genome sequence of Chlamydia pneumoniae TW183 and comparison with other Chlamydia strains based on whole genome sequence analysis.</title>
        <authorList>
            <person name="Geng M.M."/>
            <person name="Schuhmacher A."/>
            <person name="Muehldorfer I."/>
            <person name="Bensch K.W."/>
            <person name="Schaefer K.P."/>
            <person name="Schneider S."/>
            <person name="Pohl T."/>
            <person name="Essig A."/>
            <person name="Marre R."/>
            <person name="Melchers K."/>
        </authorList>
    </citation>
    <scope>NUCLEOTIDE SEQUENCE [LARGE SCALE GENOMIC DNA]</scope>
    <source>
        <strain>TW-183</strain>
    </source>
</reference>
<name>IF1_CHLPN</name>
<sequence>MAKKEDTLVLEGKVEELLPGMHFRVILENGMPVTAHLCGKMRMSNIRLLVGDRVTVEMSAYDLTKARVVYRHR</sequence>
<organism>
    <name type="scientific">Chlamydia pneumoniae</name>
    <name type="common">Chlamydophila pneumoniae</name>
    <dbReference type="NCBI Taxonomy" id="83558"/>
    <lineage>
        <taxon>Bacteria</taxon>
        <taxon>Pseudomonadati</taxon>
        <taxon>Chlamydiota</taxon>
        <taxon>Chlamydiia</taxon>
        <taxon>Chlamydiales</taxon>
        <taxon>Chlamydiaceae</taxon>
        <taxon>Chlamydia/Chlamydophila group</taxon>
        <taxon>Chlamydia</taxon>
    </lineage>
</organism>